<organism>
    <name type="scientific">Ectopseudomonas mendocina (strain ymp)</name>
    <name type="common">Pseudomonas mendocina</name>
    <dbReference type="NCBI Taxonomy" id="399739"/>
    <lineage>
        <taxon>Bacteria</taxon>
        <taxon>Pseudomonadati</taxon>
        <taxon>Pseudomonadota</taxon>
        <taxon>Gammaproteobacteria</taxon>
        <taxon>Pseudomonadales</taxon>
        <taxon>Pseudomonadaceae</taxon>
        <taxon>Ectopseudomonas</taxon>
    </lineage>
</organism>
<dbReference type="EC" id="7.1.1.-" evidence="1"/>
<dbReference type="EMBL" id="CP000680">
    <property type="protein sequence ID" value="ABP85170.1"/>
    <property type="molecule type" value="Genomic_DNA"/>
</dbReference>
<dbReference type="SMR" id="A4XV04"/>
<dbReference type="STRING" id="399739.Pmen_2414"/>
<dbReference type="KEGG" id="pmy:Pmen_2414"/>
<dbReference type="PATRIC" id="fig|399739.8.peg.2436"/>
<dbReference type="eggNOG" id="COG0649">
    <property type="taxonomic scope" value="Bacteria"/>
</dbReference>
<dbReference type="eggNOG" id="COG0852">
    <property type="taxonomic scope" value="Bacteria"/>
</dbReference>
<dbReference type="HOGENOM" id="CLU_015134_3_2_6"/>
<dbReference type="OrthoDB" id="9801496at2"/>
<dbReference type="GO" id="GO:0030964">
    <property type="term" value="C:NADH dehydrogenase complex"/>
    <property type="evidence" value="ECO:0007669"/>
    <property type="project" value="InterPro"/>
</dbReference>
<dbReference type="GO" id="GO:0005886">
    <property type="term" value="C:plasma membrane"/>
    <property type="evidence" value="ECO:0007669"/>
    <property type="project" value="UniProtKB-SubCell"/>
</dbReference>
<dbReference type="GO" id="GO:0051287">
    <property type="term" value="F:NAD binding"/>
    <property type="evidence" value="ECO:0007669"/>
    <property type="project" value="InterPro"/>
</dbReference>
<dbReference type="GO" id="GO:0008137">
    <property type="term" value="F:NADH dehydrogenase (ubiquinone) activity"/>
    <property type="evidence" value="ECO:0007669"/>
    <property type="project" value="InterPro"/>
</dbReference>
<dbReference type="GO" id="GO:0050136">
    <property type="term" value="F:NADH:ubiquinone reductase (non-electrogenic) activity"/>
    <property type="evidence" value="ECO:0007669"/>
    <property type="project" value="UniProtKB-UniRule"/>
</dbReference>
<dbReference type="GO" id="GO:0048038">
    <property type="term" value="F:quinone binding"/>
    <property type="evidence" value="ECO:0007669"/>
    <property type="project" value="UniProtKB-KW"/>
</dbReference>
<dbReference type="FunFam" id="1.10.645.10:FF:000001">
    <property type="entry name" value="NADH-quinone oxidoreductase subunit C/D"/>
    <property type="match status" value="1"/>
</dbReference>
<dbReference type="FunFam" id="3.30.460.80:FF:000001">
    <property type="entry name" value="NADH-quinone oxidoreductase subunit C/D"/>
    <property type="match status" value="1"/>
</dbReference>
<dbReference type="Gene3D" id="1.10.645.10">
    <property type="entry name" value="Cytochrome-c3 Hydrogenase, chain B"/>
    <property type="match status" value="1"/>
</dbReference>
<dbReference type="Gene3D" id="3.30.460.80">
    <property type="entry name" value="NADH:ubiquinone oxidoreductase, 30kDa subunit"/>
    <property type="match status" value="1"/>
</dbReference>
<dbReference type="HAMAP" id="MF_01357">
    <property type="entry name" value="NDH1_NuoC"/>
    <property type="match status" value="1"/>
</dbReference>
<dbReference type="HAMAP" id="MF_01359">
    <property type="entry name" value="NDH1_NuoCD_1"/>
    <property type="match status" value="1"/>
</dbReference>
<dbReference type="HAMAP" id="MF_01358">
    <property type="entry name" value="NDH1_NuoD"/>
    <property type="match status" value="1"/>
</dbReference>
<dbReference type="InterPro" id="IPR010218">
    <property type="entry name" value="NADH_DH_suC"/>
</dbReference>
<dbReference type="InterPro" id="IPR023062">
    <property type="entry name" value="NADH_DH_suCD"/>
</dbReference>
<dbReference type="InterPro" id="IPR001135">
    <property type="entry name" value="NADH_Q_OxRdtase_suD"/>
</dbReference>
<dbReference type="InterPro" id="IPR037232">
    <property type="entry name" value="NADH_quin_OxRdtase_su_C/D-like"/>
</dbReference>
<dbReference type="InterPro" id="IPR001268">
    <property type="entry name" value="NADH_UbQ_OxRdtase_30kDa_su"/>
</dbReference>
<dbReference type="InterPro" id="IPR014029">
    <property type="entry name" value="NADH_UbQ_OxRdtase_49kDa_CS"/>
</dbReference>
<dbReference type="InterPro" id="IPR022885">
    <property type="entry name" value="NDH1_su_D/H"/>
</dbReference>
<dbReference type="InterPro" id="IPR029014">
    <property type="entry name" value="NiFe-Hase_large"/>
</dbReference>
<dbReference type="NCBIfam" id="TIGR01961">
    <property type="entry name" value="NuoC_fam"/>
    <property type="match status" value="1"/>
</dbReference>
<dbReference type="NCBIfam" id="TIGR01962">
    <property type="entry name" value="NuoD"/>
    <property type="match status" value="1"/>
</dbReference>
<dbReference type="NCBIfam" id="NF004739">
    <property type="entry name" value="PRK06075.1"/>
    <property type="match status" value="1"/>
</dbReference>
<dbReference type="NCBIfam" id="NF008728">
    <property type="entry name" value="PRK11742.1"/>
    <property type="match status" value="1"/>
</dbReference>
<dbReference type="PANTHER" id="PTHR11993:SF45">
    <property type="entry name" value="NADH-QUINONE OXIDOREDUCTASE SUBUNIT C_D"/>
    <property type="match status" value="1"/>
</dbReference>
<dbReference type="PANTHER" id="PTHR11993">
    <property type="entry name" value="NADH-UBIQUINONE OXIDOREDUCTASE 49 KDA SUBUNIT"/>
    <property type="match status" value="1"/>
</dbReference>
<dbReference type="Pfam" id="PF00329">
    <property type="entry name" value="Complex1_30kDa"/>
    <property type="match status" value="1"/>
</dbReference>
<dbReference type="Pfam" id="PF00346">
    <property type="entry name" value="Complex1_49kDa"/>
    <property type="match status" value="1"/>
</dbReference>
<dbReference type="SUPFAM" id="SSF56762">
    <property type="entry name" value="HydB/Nqo4-like"/>
    <property type="match status" value="1"/>
</dbReference>
<dbReference type="SUPFAM" id="SSF143243">
    <property type="entry name" value="Nqo5-like"/>
    <property type="match status" value="1"/>
</dbReference>
<dbReference type="PROSITE" id="PS00535">
    <property type="entry name" value="COMPLEX1_49K"/>
    <property type="match status" value="1"/>
</dbReference>
<proteinExistence type="inferred from homology"/>
<reference key="1">
    <citation type="submission" date="2007-04" db="EMBL/GenBank/DDBJ databases">
        <title>Complete sequence of Pseudomonas mendocina ymp.</title>
        <authorList>
            <consortium name="US DOE Joint Genome Institute"/>
            <person name="Copeland A."/>
            <person name="Lucas S."/>
            <person name="Lapidus A."/>
            <person name="Barry K."/>
            <person name="Glavina del Rio T."/>
            <person name="Dalin E."/>
            <person name="Tice H."/>
            <person name="Pitluck S."/>
            <person name="Kiss H."/>
            <person name="Brettin T."/>
            <person name="Detter J.C."/>
            <person name="Bruce D."/>
            <person name="Han C."/>
            <person name="Schmutz J."/>
            <person name="Larimer F."/>
            <person name="Land M."/>
            <person name="Hauser L."/>
            <person name="Kyrpides N."/>
            <person name="Mikhailova N."/>
            <person name="Hersman L."/>
            <person name="Dubois J."/>
            <person name="Maurice P."/>
            <person name="Richardson P."/>
        </authorList>
    </citation>
    <scope>NUCLEOTIDE SEQUENCE [LARGE SCALE GENOMIC DNA]</scope>
    <source>
        <strain>ymp</strain>
    </source>
</reference>
<comment type="function">
    <text evidence="1">NDH-1 shuttles electrons from NADH, via FMN and iron-sulfur (Fe-S) centers, to quinones in the respiratory chain. The immediate electron acceptor for the enzyme in this species is believed to be ubiquinone. Couples the redox reaction to proton translocation (for every two electrons transferred, four hydrogen ions are translocated across the cytoplasmic membrane), and thus conserves the redox energy in a proton gradient.</text>
</comment>
<comment type="catalytic activity">
    <reaction evidence="1">
        <text>a quinone + NADH + 5 H(+)(in) = a quinol + NAD(+) + 4 H(+)(out)</text>
        <dbReference type="Rhea" id="RHEA:57888"/>
        <dbReference type="ChEBI" id="CHEBI:15378"/>
        <dbReference type="ChEBI" id="CHEBI:24646"/>
        <dbReference type="ChEBI" id="CHEBI:57540"/>
        <dbReference type="ChEBI" id="CHEBI:57945"/>
        <dbReference type="ChEBI" id="CHEBI:132124"/>
    </reaction>
</comment>
<comment type="subunit">
    <text evidence="1">NDH-1 is composed of 13 different subunits. Subunits NuoB, CD, E, F, and G constitute the peripheral sector of the complex.</text>
</comment>
<comment type="subcellular location">
    <subcellularLocation>
        <location evidence="1">Cell inner membrane</location>
        <topology evidence="1">Peripheral membrane protein</topology>
        <orientation evidence="1">Cytoplasmic side</orientation>
    </subcellularLocation>
</comment>
<comment type="similarity">
    <text evidence="1">In the N-terminal section; belongs to the complex I 30 kDa subunit family.</text>
</comment>
<comment type="similarity">
    <text evidence="1">In the C-terminal section; belongs to the complex I 49 kDa subunit family.</text>
</comment>
<accession>A4XV04</accession>
<protein>
    <recommendedName>
        <fullName evidence="1">NADH-quinone oxidoreductase subunit C/D</fullName>
        <ecNumber evidence="1">7.1.1.-</ecNumber>
    </recommendedName>
    <alternativeName>
        <fullName evidence="1">NADH dehydrogenase I subunit C/D</fullName>
    </alternativeName>
    <alternativeName>
        <fullName evidence="1">NDH-1 subunit C/D</fullName>
    </alternativeName>
</protein>
<evidence type="ECO:0000255" key="1">
    <source>
        <dbReference type="HAMAP-Rule" id="MF_01359"/>
    </source>
</evidence>
<gene>
    <name evidence="1" type="primary">nuoC</name>
    <name evidence="1" type="synonym">nuoCD</name>
    <name evidence="1" type="synonym">nuoD</name>
    <name type="ordered locus">Pmen_2414</name>
</gene>
<sequence length="593" mass="68025">MTADTAVSIPPYQVDDQDVIAELRARLGDDGFTLQATRTGMPVLWVSRERLLEVLKCLRHLPRPYVMLYDLHGVDERLRTQRRGLPDADFTVFYHLMSLERNSDLMVKVALSERDLNLPTATGIWPNANWYEREVWDLYGITFQGHPHLTRIMMPPTWEGHPLRKDYPARATEFDPFSLTLAKQQLEEEAARFRPEDWGMKRGGEHEDYMFLNLGPNHPSAHGAFRIILQLDGEEIVDCVPEIGYHHRGAEKMAERQSWHSFIPYTDRIDYLGGVMNNLPYVLAVEKLAGIKVPDRVDFIRVMLAEFFRITSHLLFLGTYIQDVGAMTPVFFTFTDRQRAYKVIEAITGFRLHPAWYRIGGVAHDLPRGWDKLVKEFVDWLPRRLDEYEKAALKNSILKARTIGVAQYNTKEALEWGTTGAGLRATGCDFDLRKARPYSGYEHFEFEVPLAANGDAYDRCMVRVEEMRQSIRIIDQCLKNMPEGPYKADHPLTTPPPKERTLQHIETLITHFLQVSWGPVMPAGEALQMIEATKGINSYYLTSDGSTMSYRTRIRTPSFAHLQQIPSVIRGSMVADLIAYLGSIDFVMADVDR</sequence>
<name>NUOCD_ECTM1</name>
<feature type="chain" id="PRO_0000358660" description="NADH-quinone oxidoreductase subunit C/D">
    <location>
        <begin position="1"/>
        <end position="593"/>
    </location>
</feature>
<feature type="region of interest" description="NADH dehydrogenase I subunit C" evidence="1">
    <location>
        <begin position="1"/>
        <end position="184"/>
    </location>
</feature>
<feature type="region of interest" description="NADH dehydrogenase I subunit D" evidence="1">
    <location>
        <begin position="208"/>
        <end position="593"/>
    </location>
</feature>
<keyword id="KW-0997">Cell inner membrane</keyword>
<keyword id="KW-1003">Cell membrane</keyword>
<keyword id="KW-0472">Membrane</keyword>
<keyword id="KW-0511">Multifunctional enzyme</keyword>
<keyword id="KW-0520">NAD</keyword>
<keyword id="KW-0874">Quinone</keyword>
<keyword id="KW-1278">Translocase</keyword>
<keyword id="KW-0813">Transport</keyword>
<keyword id="KW-0830">Ubiquinone</keyword>